<accession>A7Z235</accession>
<proteinExistence type="inferred from homology"/>
<gene>
    <name evidence="1" type="primary">guaA</name>
    <name type="ordered locus">RBAM_006760</name>
</gene>
<feature type="chain" id="PRO_1000120211" description="GMP synthase [glutamine-hydrolyzing]">
    <location>
        <begin position="1"/>
        <end position="513"/>
    </location>
</feature>
<feature type="domain" description="Glutamine amidotransferase type-1" evidence="1">
    <location>
        <begin position="8"/>
        <end position="198"/>
    </location>
</feature>
<feature type="domain" description="GMPS ATP-PPase" evidence="1">
    <location>
        <begin position="199"/>
        <end position="388"/>
    </location>
</feature>
<feature type="active site" description="Nucleophile" evidence="1">
    <location>
        <position position="85"/>
    </location>
</feature>
<feature type="active site" evidence="1">
    <location>
        <position position="172"/>
    </location>
</feature>
<feature type="active site" evidence="1">
    <location>
        <position position="174"/>
    </location>
</feature>
<feature type="binding site" evidence="1">
    <location>
        <begin position="226"/>
        <end position="232"/>
    </location>
    <ligand>
        <name>ATP</name>
        <dbReference type="ChEBI" id="CHEBI:30616"/>
    </ligand>
</feature>
<name>GUAA_BACVZ</name>
<keyword id="KW-0067">ATP-binding</keyword>
<keyword id="KW-0315">Glutamine amidotransferase</keyword>
<keyword id="KW-0332">GMP biosynthesis</keyword>
<keyword id="KW-0436">Ligase</keyword>
<keyword id="KW-0547">Nucleotide-binding</keyword>
<keyword id="KW-0658">Purine biosynthesis</keyword>
<reference key="1">
    <citation type="journal article" date="2007" name="Nat. Biotechnol.">
        <title>Comparative analysis of the complete genome sequence of the plant growth-promoting bacterium Bacillus amyloliquefaciens FZB42.</title>
        <authorList>
            <person name="Chen X.H."/>
            <person name="Koumoutsi A."/>
            <person name="Scholz R."/>
            <person name="Eisenreich A."/>
            <person name="Schneider K."/>
            <person name="Heinemeyer I."/>
            <person name="Morgenstern B."/>
            <person name="Voss B."/>
            <person name="Hess W.R."/>
            <person name="Reva O."/>
            <person name="Junge H."/>
            <person name="Voigt B."/>
            <person name="Jungblut P.R."/>
            <person name="Vater J."/>
            <person name="Suessmuth R."/>
            <person name="Liesegang H."/>
            <person name="Strittmatter A."/>
            <person name="Gottschalk G."/>
            <person name="Borriss R."/>
        </authorList>
    </citation>
    <scope>NUCLEOTIDE SEQUENCE [LARGE SCALE GENOMIC DNA]</scope>
    <source>
        <strain>DSM 23117 / BGSC 10A6 / LMG 26770 / FZB42</strain>
    </source>
</reference>
<sequence length="513" mass="57666">MTKLVNEMILVLDFGSQYNQLITRRIREFGVYSELHPHTLTAEEIKEMNPKGIILSGGPNSVYDEGSFRCDEKIFELDIPVLGICYGMQLMTHYLGGKVEAASQREYGKANIQIQGTPDLFKDLPEEQVVWMSHGDLVVEVPEGFTVDATSHHCPNSAMSKADKNWYGVQFHPEVRHSEYGNDLLKNFVFGVCDCEGKWSMENFIEIEMQKIRETVGDKQVLCALSGGVDSSVVAALIHKAIGDQLTCIFVDHGLLRKGEAEGVMKTFSEGFNMNVIKVDAKDRFLNKLKGVSDPEQKRKIIGNEFIYVFDDEADKLKGIDYLAQGTLYTDIIESGTATAQTIKSHHNVGGLPEDMQFELIEPLNTLFKDEVRALGTELGLPDDIVWRQPFPGPGLGIRVLGEVTEEKLEIVRESDAILREEVANHGLERDIWQYFTVLPDIRSVGVMGDARTYDYTIGIRAVTSIDGMTSDWARIPWDVLEVISTRIVNEVKHINRVVYDITSKPPATIEWE</sequence>
<evidence type="ECO:0000255" key="1">
    <source>
        <dbReference type="HAMAP-Rule" id="MF_00344"/>
    </source>
</evidence>
<organism>
    <name type="scientific">Bacillus velezensis (strain DSM 23117 / BGSC 10A6 / LMG 26770 / FZB42)</name>
    <name type="common">Bacillus amyloliquefaciens subsp. plantarum</name>
    <dbReference type="NCBI Taxonomy" id="326423"/>
    <lineage>
        <taxon>Bacteria</taxon>
        <taxon>Bacillati</taxon>
        <taxon>Bacillota</taxon>
        <taxon>Bacilli</taxon>
        <taxon>Bacillales</taxon>
        <taxon>Bacillaceae</taxon>
        <taxon>Bacillus</taxon>
        <taxon>Bacillus amyloliquefaciens group</taxon>
    </lineage>
</organism>
<dbReference type="EC" id="6.3.5.2" evidence="1"/>
<dbReference type="EMBL" id="CP000560">
    <property type="protein sequence ID" value="ABS73061.1"/>
    <property type="molecule type" value="Genomic_DNA"/>
</dbReference>
<dbReference type="RefSeq" id="WP_007408887.1">
    <property type="nucleotide sequence ID" value="NC_009725.2"/>
</dbReference>
<dbReference type="SMR" id="A7Z235"/>
<dbReference type="MEROPS" id="C26.957"/>
<dbReference type="GeneID" id="93079810"/>
<dbReference type="KEGG" id="bay:RBAM_006760"/>
<dbReference type="HOGENOM" id="CLU_014340_0_5_9"/>
<dbReference type="UniPathway" id="UPA00189">
    <property type="reaction ID" value="UER00296"/>
</dbReference>
<dbReference type="Proteomes" id="UP000001120">
    <property type="component" value="Chromosome"/>
</dbReference>
<dbReference type="GO" id="GO:0005829">
    <property type="term" value="C:cytosol"/>
    <property type="evidence" value="ECO:0007669"/>
    <property type="project" value="TreeGrafter"/>
</dbReference>
<dbReference type="GO" id="GO:0005524">
    <property type="term" value="F:ATP binding"/>
    <property type="evidence" value="ECO:0007669"/>
    <property type="project" value="UniProtKB-UniRule"/>
</dbReference>
<dbReference type="GO" id="GO:0003921">
    <property type="term" value="F:GMP synthase activity"/>
    <property type="evidence" value="ECO:0007669"/>
    <property type="project" value="InterPro"/>
</dbReference>
<dbReference type="CDD" id="cd01742">
    <property type="entry name" value="GATase1_GMP_Synthase"/>
    <property type="match status" value="1"/>
</dbReference>
<dbReference type="CDD" id="cd01997">
    <property type="entry name" value="GMP_synthase_C"/>
    <property type="match status" value="1"/>
</dbReference>
<dbReference type="FunFam" id="3.30.300.10:FF:000002">
    <property type="entry name" value="GMP synthase [glutamine-hydrolyzing]"/>
    <property type="match status" value="1"/>
</dbReference>
<dbReference type="FunFam" id="3.40.50.620:FF:000001">
    <property type="entry name" value="GMP synthase [glutamine-hydrolyzing]"/>
    <property type="match status" value="1"/>
</dbReference>
<dbReference type="FunFam" id="3.40.50.880:FF:000001">
    <property type="entry name" value="GMP synthase [glutamine-hydrolyzing]"/>
    <property type="match status" value="1"/>
</dbReference>
<dbReference type="Gene3D" id="3.30.300.10">
    <property type="match status" value="1"/>
</dbReference>
<dbReference type="Gene3D" id="3.40.50.880">
    <property type="match status" value="1"/>
</dbReference>
<dbReference type="Gene3D" id="3.40.50.620">
    <property type="entry name" value="HUPs"/>
    <property type="match status" value="1"/>
</dbReference>
<dbReference type="HAMAP" id="MF_00344">
    <property type="entry name" value="GMP_synthase"/>
    <property type="match status" value="1"/>
</dbReference>
<dbReference type="InterPro" id="IPR029062">
    <property type="entry name" value="Class_I_gatase-like"/>
</dbReference>
<dbReference type="InterPro" id="IPR017926">
    <property type="entry name" value="GATASE"/>
</dbReference>
<dbReference type="InterPro" id="IPR001674">
    <property type="entry name" value="GMP_synth_C"/>
</dbReference>
<dbReference type="InterPro" id="IPR004739">
    <property type="entry name" value="GMP_synth_GATase"/>
</dbReference>
<dbReference type="InterPro" id="IPR022955">
    <property type="entry name" value="GMP_synthase"/>
</dbReference>
<dbReference type="InterPro" id="IPR025777">
    <property type="entry name" value="GMPS_ATP_PPase_dom"/>
</dbReference>
<dbReference type="InterPro" id="IPR022310">
    <property type="entry name" value="NAD/GMP_synthase"/>
</dbReference>
<dbReference type="InterPro" id="IPR014729">
    <property type="entry name" value="Rossmann-like_a/b/a_fold"/>
</dbReference>
<dbReference type="NCBIfam" id="TIGR00884">
    <property type="entry name" value="guaA_Cterm"/>
    <property type="match status" value="1"/>
</dbReference>
<dbReference type="NCBIfam" id="TIGR00888">
    <property type="entry name" value="guaA_Nterm"/>
    <property type="match status" value="1"/>
</dbReference>
<dbReference type="NCBIfam" id="NF000848">
    <property type="entry name" value="PRK00074.1"/>
    <property type="match status" value="1"/>
</dbReference>
<dbReference type="PANTHER" id="PTHR11922:SF2">
    <property type="entry name" value="GMP SYNTHASE [GLUTAMINE-HYDROLYZING]"/>
    <property type="match status" value="1"/>
</dbReference>
<dbReference type="PANTHER" id="PTHR11922">
    <property type="entry name" value="GMP SYNTHASE-RELATED"/>
    <property type="match status" value="1"/>
</dbReference>
<dbReference type="Pfam" id="PF00117">
    <property type="entry name" value="GATase"/>
    <property type="match status" value="1"/>
</dbReference>
<dbReference type="Pfam" id="PF00958">
    <property type="entry name" value="GMP_synt_C"/>
    <property type="match status" value="1"/>
</dbReference>
<dbReference type="Pfam" id="PF02540">
    <property type="entry name" value="NAD_synthase"/>
    <property type="match status" value="1"/>
</dbReference>
<dbReference type="PRINTS" id="PR00097">
    <property type="entry name" value="ANTSNTHASEII"/>
</dbReference>
<dbReference type="PRINTS" id="PR00099">
    <property type="entry name" value="CPSGATASE"/>
</dbReference>
<dbReference type="PRINTS" id="PR00096">
    <property type="entry name" value="GATASE"/>
</dbReference>
<dbReference type="SUPFAM" id="SSF52402">
    <property type="entry name" value="Adenine nucleotide alpha hydrolases-like"/>
    <property type="match status" value="1"/>
</dbReference>
<dbReference type="SUPFAM" id="SSF52317">
    <property type="entry name" value="Class I glutamine amidotransferase-like"/>
    <property type="match status" value="1"/>
</dbReference>
<dbReference type="SUPFAM" id="SSF54810">
    <property type="entry name" value="GMP synthetase C-terminal dimerisation domain"/>
    <property type="match status" value="1"/>
</dbReference>
<dbReference type="PROSITE" id="PS51273">
    <property type="entry name" value="GATASE_TYPE_1"/>
    <property type="match status" value="1"/>
</dbReference>
<dbReference type="PROSITE" id="PS51553">
    <property type="entry name" value="GMPS_ATP_PPASE"/>
    <property type="match status" value="1"/>
</dbReference>
<comment type="function">
    <text evidence="1">Catalyzes the synthesis of GMP from XMP.</text>
</comment>
<comment type="catalytic activity">
    <reaction evidence="1">
        <text>XMP + L-glutamine + ATP + H2O = GMP + L-glutamate + AMP + diphosphate + 2 H(+)</text>
        <dbReference type="Rhea" id="RHEA:11680"/>
        <dbReference type="ChEBI" id="CHEBI:15377"/>
        <dbReference type="ChEBI" id="CHEBI:15378"/>
        <dbReference type="ChEBI" id="CHEBI:29985"/>
        <dbReference type="ChEBI" id="CHEBI:30616"/>
        <dbReference type="ChEBI" id="CHEBI:33019"/>
        <dbReference type="ChEBI" id="CHEBI:57464"/>
        <dbReference type="ChEBI" id="CHEBI:58115"/>
        <dbReference type="ChEBI" id="CHEBI:58359"/>
        <dbReference type="ChEBI" id="CHEBI:456215"/>
        <dbReference type="EC" id="6.3.5.2"/>
    </reaction>
</comment>
<comment type="pathway">
    <text evidence="1">Purine metabolism; GMP biosynthesis; GMP from XMP (L-Gln route): step 1/1.</text>
</comment>
<comment type="subunit">
    <text evidence="1">Homodimer.</text>
</comment>
<protein>
    <recommendedName>
        <fullName evidence="1">GMP synthase [glutamine-hydrolyzing]</fullName>
        <ecNumber evidence="1">6.3.5.2</ecNumber>
    </recommendedName>
    <alternativeName>
        <fullName evidence="1">GMP synthetase</fullName>
    </alternativeName>
    <alternativeName>
        <fullName evidence="1">Glutamine amidotransferase</fullName>
    </alternativeName>
</protein>